<organism>
    <name type="scientific">Homo sapiens</name>
    <name type="common">Human</name>
    <dbReference type="NCBI Taxonomy" id="9606"/>
    <lineage>
        <taxon>Eukaryota</taxon>
        <taxon>Metazoa</taxon>
        <taxon>Chordata</taxon>
        <taxon>Craniata</taxon>
        <taxon>Vertebrata</taxon>
        <taxon>Euteleostomi</taxon>
        <taxon>Mammalia</taxon>
        <taxon>Eutheria</taxon>
        <taxon>Euarchontoglires</taxon>
        <taxon>Primates</taxon>
        <taxon>Haplorrhini</taxon>
        <taxon>Catarrhini</taxon>
        <taxon>Hominidae</taxon>
        <taxon>Homo</taxon>
    </lineage>
</organism>
<evidence type="ECO:0000250" key="1">
    <source>
        <dbReference type="UniProtKB" id="P24464"/>
    </source>
</evidence>
<evidence type="ECO:0000250" key="2">
    <source>
        <dbReference type="UniProtKB" id="Q02928"/>
    </source>
</evidence>
<evidence type="ECO:0000255" key="3"/>
<evidence type="ECO:0000269" key="4">
    <source>
    </source>
</evidence>
<evidence type="ECO:0000269" key="5">
    <source>
    </source>
</evidence>
<evidence type="ECO:0000269" key="6">
    <source>
    </source>
</evidence>
<evidence type="ECO:0000269" key="7">
    <source>
    </source>
</evidence>
<evidence type="ECO:0000269" key="8">
    <source>
    </source>
</evidence>
<evidence type="ECO:0000269" key="9">
    <source>
    </source>
</evidence>
<evidence type="ECO:0000269" key="10">
    <source>
    </source>
</evidence>
<evidence type="ECO:0000269" key="11">
    <source>
    </source>
</evidence>
<evidence type="ECO:0000269" key="12">
    <source>
    </source>
</evidence>
<evidence type="ECO:0000269" key="13">
    <source ref="4"/>
</evidence>
<evidence type="ECO:0000303" key="14">
    <source>
    </source>
</evidence>
<evidence type="ECO:0000303" key="15">
    <source>
    </source>
</evidence>
<evidence type="ECO:0000305" key="16"/>
<evidence type="ECO:0000305" key="17">
    <source>
    </source>
</evidence>
<evidence type="ECO:0000305" key="18">
    <source>
    </source>
</evidence>
<evidence type="ECO:0000305" key="19">
    <source>
    </source>
</evidence>
<evidence type="ECO:0000305" key="20">
    <source>
    </source>
</evidence>
<evidence type="ECO:0000305" key="21">
    <source>
    </source>
</evidence>
<evidence type="ECO:0000312" key="22">
    <source>
        <dbReference type="EMBL" id="BAF82113.1"/>
    </source>
</evidence>
<evidence type="ECO:0000312" key="23">
    <source>
        <dbReference type="HGNC" id="HGNC:13265"/>
    </source>
</evidence>
<dbReference type="EC" id="1.14.14.1" evidence="6 8 10 12"/>
<dbReference type="EC" id="1.14.14.79" evidence="9"/>
<dbReference type="EC" id="1.14.14.80" evidence="9 12"/>
<dbReference type="EC" id="1.14.14.78" evidence="10"/>
<dbReference type="EMBL" id="AF236085">
    <property type="protein sequence ID" value="AAG15889.1"/>
    <property type="molecule type" value="mRNA"/>
</dbReference>
<dbReference type="EMBL" id="AK289424">
    <property type="protein sequence ID" value="BAF82113.1"/>
    <property type="molecule type" value="mRNA"/>
</dbReference>
<dbReference type="EMBL" id="AC005336">
    <property type="protein sequence ID" value="AAC27731.1"/>
    <property type="status" value="ALT_SEQ"/>
    <property type="molecule type" value="Genomic_DNA"/>
</dbReference>
<dbReference type="EMBL" id="AC020950">
    <property type="status" value="NOT_ANNOTATED_CDS"/>
    <property type="molecule type" value="Genomic_DNA"/>
</dbReference>
<dbReference type="EMBL" id="AC011517">
    <property type="status" value="NOT_ANNOTATED_CDS"/>
    <property type="molecule type" value="Genomic_DNA"/>
</dbReference>
<dbReference type="EMBL" id="CH471106">
    <property type="protein sequence ID" value="EAW84512.1"/>
    <property type="molecule type" value="Genomic_DNA"/>
</dbReference>
<dbReference type="EMBL" id="CH471106">
    <property type="protein sequence ID" value="EAW84513.1"/>
    <property type="molecule type" value="Genomic_DNA"/>
</dbReference>
<dbReference type="EMBL" id="BC016853">
    <property type="protein sequence ID" value="AAH16853.1"/>
    <property type="molecule type" value="mRNA"/>
</dbReference>
<dbReference type="CCDS" id="CCDS12337.1"/>
<dbReference type="RefSeq" id="NP_001122404.1">
    <property type="nucleotide sequence ID" value="NM_001128932.2"/>
</dbReference>
<dbReference type="RefSeq" id="NP_067010.3">
    <property type="nucleotide sequence ID" value="NM_021187.4"/>
</dbReference>
<dbReference type="SMR" id="Q9HBI6"/>
<dbReference type="BioGRID" id="121790">
    <property type="interactions" value="15"/>
</dbReference>
<dbReference type="FunCoup" id="Q9HBI6">
    <property type="interactions" value="197"/>
</dbReference>
<dbReference type="IntAct" id="Q9HBI6">
    <property type="interactions" value="2"/>
</dbReference>
<dbReference type="STRING" id="9606.ENSP00000384588"/>
<dbReference type="BindingDB" id="Q9HBI6"/>
<dbReference type="ChEMBL" id="CHEMBL4295949"/>
<dbReference type="SwissLipids" id="SLP:000000470"/>
<dbReference type="iPTMnet" id="Q9HBI6"/>
<dbReference type="PhosphoSitePlus" id="Q9HBI6"/>
<dbReference type="SwissPalm" id="Q9HBI6"/>
<dbReference type="BioMuta" id="CYP4F11"/>
<dbReference type="DMDM" id="296439388"/>
<dbReference type="jPOST" id="Q9HBI6"/>
<dbReference type="MassIVE" id="Q9HBI6"/>
<dbReference type="PaxDb" id="9606-ENSP00000384588"/>
<dbReference type="PeptideAtlas" id="Q9HBI6"/>
<dbReference type="ProteomicsDB" id="81562"/>
<dbReference type="Pumba" id="Q9HBI6"/>
<dbReference type="Antibodypedia" id="2634">
    <property type="antibodies" value="154 antibodies from 29 providers"/>
</dbReference>
<dbReference type="DNASU" id="57834"/>
<dbReference type="Ensembl" id="ENST00000248041.12">
    <property type="protein sequence ID" value="ENSP00000248041.6"/>
    <property type="gene ID" value="ENSG00000171903.17"/>
</dbReference>
<dbReference type="Ensembl" id="ENST00000402119.9">
    <property type="protein sequence ID" value="ENSP00000384588.2"/>
    <property type="gene ID" value="ENSG00000171903.17"/>
</dbReference>
<dbReference type="GeneID" id="57834"/>
<dbReference type="KEGG" id="hsa:57834"/>
<dbReference type="MANE-Select" id="ENST00000402119.9">
    <property type="protein sequence ID" value="ENSP00000384588.2"/>
    <property type="RefSeq nucleotide sequence ID" value="NM_021187.4"/>
    <property type="RefSeq protein sequence ID" value="NP_067010.3"/>
</dbReference>
<dbReference type="UCSC" id="uc002nbt.3">
    <property type="organism name" value="human"/>
</dbReference>
<dbReference type="AGR" id="HGNC:13265"/>
<dbReference type="CTD" id="57834"/>
<dbReference type="DisGeNET" id="57834"/>
<dbReference type="GeneCards" id="CYP4F11"/>
<dbReference type="HGNC" id="HGNC:13265">
    <property type="gene designation" value="CYP4F11"/>
</dbReference>
<dbReference type="HPA" id="ENSG00000171903">
    <property type="expression patterns" value="Tissue enhanced (intestine, liver)"/>
</dbReference>
<dbReference type="MIM" id="611517">
    <property type="type" value="gene"/>
</dbReference>
<dbReference type="neXtProt" id="NX_Q9HBI6"/>
<dbReference type="OpenTargets" id="ENSG00000171903"/>
<dbReference type="PharmGKB" id="PA27120"/>
<dbReference type="VEuPathDB" id="HostDB:ENSG00000171903"/>
<dbReference type="eggNOG" id="KOG0157">
    <property type="taxonomic scope" value="Eukaryota"/>
</dbReference>
<dbReference type="GeneTree" id="ENSGT00940000164421"/>
<dbReference type="HOGENOM" id="CLU_001570_5_1_1"/>
<dbReference type="InParanoid" id="Q9HBI6"/>
<dbReference type="OMA" id="FHQTIME"/>
<dbReference type="OrthoDB" id="1470350at2759"/>
<dbReference type="PAN-GO" id="Q9HBI6">
    <property type="GO annotations" value="7 GO annotations based on evolutionary models"/>
</dbReference>
<dbReference type="PhylomeDB" id="Q9HBI6"/>
<dbReference type="TreeFam" id="TF105088"/>
<dbReference type="PathwayCommons" id="Q9HBI6"/>
<dbReference type="Reactome" id="R-HSA-211935">
    <property type="pathway name" value="Fatty acids"/>
</dbReference>
<dbReference type="Reactome" id="R-HSA-211958">
    <property type="pathway name" value="Miscellaneous substrates"/>
</dbReference>
<dbReference type="Reactome" id="R-HSA-211979">
    <property type="pathway name" value="Eicosanoids"/>
</dbReference>
<dbReference type="Reactome" id="R-HSA-2142691">
    <property type="pathway name" value="Synthesis of Leukotrienes (LT) and Eoxins (EX)"/>
</dbReference>
<dbReference type="SignaLink" id="Q9HBI6"/>
<dbReference type="UniPathway" id="UPA00382"/>
<dbReference type="UniPathway" id="UPA00383"/>
<dbReference type="UniPathway" id="UPA01054"/>
<dbReference type="BioGRID-ORCS" id="57834">
    <property type="hits" value="77 hits in 1149 CRISPR screens"/>
</dbReference>
<dbReference type="ChiTaRS" id="CYP4F11">
    <property type="organism name" value="human"/>
</dbReference>
<dbReference type="GeneWiki" id="CYP4F11"/>
<dbReference type="GenomeRNAi" id="57834"/>
<dbReference type="Pharos" id="Q9HBI6">
    <property type="development level" value="Tbio"/>
</dbReference>
<dbReference type="PRO" id="PR:Q9HBI6"/>
<dbReference type="Proteomes" id="UP000005640">
    <property type="component" value="Chromosome 19"/>
</dbReference>
<dbReference type="RNAct" id="Q9HBI6">
    <property type="molecule type" value="protein"/>
</dbReference>
<dbReference type="Bgee" id="ENSG00000171903">
    <property type="expression patterns" value="Expressed in right lobe of liver and 102 other cell types or tissues"/>
</dbReference>
<dbReference type="ExpressionAtlas" id="Q9HBI6">
    <property type="expression patterns" value="baseline and differential"/>
</dbReference>
<dbReference type="GO" id="GO:0005789">
    <property type="term" value="C:endoplasmic reticulum membrane"/>
    <property type="evidence" value="ECO:0000304"/>
    <property type="project" value="Reactome"/>
</dbReference>
<dbReference type="GO" id="GO:0052869">
    <property type="term" value="F:arachidonate omega-hydroxylase activity"/>
    <property type="evidence" value="ECO:0007669"/>
    <property type="project" value="RHEA"/>
</dbReference>
<dbReference type="GO" id="GO:0005504">
    <property type="term" value="F:fatty acid binding"/>
    <property type="evidence" value="ECO:0000314"/>
    <property type="project" value="BHF-UCL"/>
</dbReference>
<dbReference type="GO" id="GO:0020037">
    <property type="term" value="F:heme binding"/>
    <property type="evidence" value="ECO:0007669"/>
    <property type="project" value="InterPro"/>
</dbReference>
<dbReference type="GO" id="GO:0005506">
    <property type="term" value="F:iron ion binding"/>
    <property type="evidence" value="ECO:0007669"/>
    <property type="project" value="InterPro"/>
</dbReference>
<dbReference type="GO" id="GO:0102033">
    <property type="term" value="F:long-chain fatty acid omega-hydroxylase activity"/>
    <property type="evidence" value="ECO:0000314"/>
    <property type="project" value="UniProtKB"/>
</dbReference>
<dbReference type="GO" id="GO:0004497">
    <property type="term" value="F:monooxygenase activity"/>
    <property type="evidence" value="ECO:0000304"/>
    <property type="project" value="Reactome"/>
</dbReference>
<dbReference type="GO" id="GO:0016709">
    <property type="term" value="F:oxidoreductase activity, acting on paired donors, with incorporation or reduction of molecular oxygen, NAD(P)H as one donor, and incorporation of one atom of oxygen"/>
    <property type="evidence" value="ECO:0000314"/>
    <property type="project" value="UniProtKB"/>
</dbReference>
<dbReference type="GO" id="GO:0019369">
    <property type="term" value="P:arachidonate metabolic process"/>
    <property type="evidence" value="ECO:0000318"/>
    <property type="project" value="GO_Central"/>
</dbReference>
<dbReference type="GO" id="GO:0007596">
    <property type="term" value="P:blood coagulation"/>
    <property type="evidence" value="ECO:0000304"/>
    <property type="project" value="UniProtKB"/>
</dbReference>
<dbReference type="GO" id="GO:1903604">
    <property type="term" value="P:cytochrome metabolic process"/>
    <property type="evidence" value="ECO:0000304"/>
    <property type="project" value="Reactome"/>
</dbReference>
<dbReference type="GO" id="GO:0006631">
    <property type="term" value="P:fatty acid metabolic process"/>
    <property type="evidence" value="ECO:0000314"/>
    <property type="project" value="BHF-UCL"/>
</dbReference>
<dbReference type="GO" id="GO:0042361">
    <property type="term" value="P:menaquinone catabolic process"/>
    <property type="evidence" value="ECO:0000314"/>
    <property type="project" value="UniProtKB"/>
</dbReference>
<dbReference type="GO" id="GO:0097267">
    <property type="term" value="P:omega-hydroxylase P450 pathway"/>
    <property type="evidence" value="ECO:0000314"/>
    <property type="project" value="UniProtKB"/>
</dbReference>
<dbReference type="GO" id="GO:0031408">
    <property type="term" value="P:oxylipin biosynthetic process"/>
    <property type="evidence" value="ECO:0007669"/>
    <property type="project" value="UniProtKB-UniPathway"/>
</dbReference>
<dbReference type="GO" id="GO:0042376">
    <property type="term" value="P:phylloquinone catabolic process"/>
    <property type="evidence" value="ECO:0000314"/>
    <property type="project" value="UniProtKB"/>
</dbReference>
<dbReference type="GO" id="GO:0042377">
    <property type="term" value="P:vitamin K catabolic process"/>
    <property type="evidence" value="ECO:0000314"/>
    <property type="project" value="UniProtKB"/>
</dbReference>
<dbReference type="CDD" id="cd20679">
    <property type="entry name" value="CYP4F"/>
    <property type="match status" value="1"/>
</dbReference>
<dbReference type="FunFam" id="1.10.630.10:FF:000005">
    <property type="entry name" value="cytochrome P450 4F22 isoform X2"/>
    <property type="match status" value="1"/>
</dbReference>
<dbReference type="Gene3D" id="1.10.630.10">
    <property type="entry name" value="Cytochrome P450"/>
    <property type="match status" value="1"/>
</dbReference>
<dbReference type="InterPro" id="IPR001128">
    <property type="entry name" value="Cyt_P450"/>
</dbReference>
<dbReference type="InterPro" id="IPR017972">
    <property type="entry name" value="Cyt_P450_CS"/>
</dbReference>
<dbReference type="InterPro" id="IPR002401">
    <property type="entry name" value="Cyt_P450_E_grp-I"/>
</dbReference>
<dbReference type="InterPro" id="IPR036396">
    <property type="entry name" value="Cyt_P450_sf"/>
</dbReference>
<dbReference type="InterPro" id="IPR050196">
    <property type="entry name" value="Cytochrome_P450_Monoox"/>
</dbReference>
<dbReference type="PANTHER" id="PTHR24291:SF196">
    <property type="entry name" value="CYTOCHROME P450 4F11"/>
    <property type="match status" value="1"/>
</dbReference>
<dbReference type="PANTHER" id="PTHR24291">
    <property type="entry name" value="CYTOCHROME P450 FAMILY 4"/>
    <property type="match status" value="1"/>
</dbReference>
<dbReference type="Pfam" id="PF00067">
    <property type="entry name" value="p450"/>
    <property type="match status" value="1"/>
</dbReference>
<dbReference type="PRINTS" id="PR00463">
    <property type="entry name" value="EP450I"/>
</dbReference>
<dbReference type="PRINTS" id="PR00385">
    <property type="entry name" value="P450"/>
</dbReference>
<dbReference type="SUPFAM" id="SSF48264">
    <property type="entry name" value="Cytochrome P450"/>
    <property type="match status" value="1"/>
</dbReference>
<dbReference type="PROSITE" id="PS00086">
    <property type="entry name" value="CYTOCHROME_P450"/>
    <property type="match status" value="1"/>
</dbReference>
<name>CP4FB_HUMAN</name>
<proteinExistence type="evidence at protein level"/>
<protein>
    <recommendedName>
        <fullName evidence="15">Cytochrome P450 4F11</fullName>
        <shortName>CYPIVF11</shortName>
        <ecNumber evidence="6 8 10 12">1.14.14.1</ecNumber>
    </recommendedName>
    <alternativeName>
        <fullName evidence="18">3-hydroxy fatty acids omega-hydroxylase CYP4F11</fullName>
    </alternativeName>
    <alternativeName>
        <fullName evidence="19">Docosahexaenoic acid omega-hydroxylase</fullName>
        <ecNumber evidence="9">1.14.14.79</ecNumber>
    </alternativeName>
    <alternativeName>
        <fullName evidence="19">Long-chain fatty acid omega-monooxygenase</fullName>
        <ecNumber evidence="9 12">1.14.14.80</ecNumber>
    </alternativeName>
    <alternativeName>
        <fullName evidence="20">Phylloquinone omega-hydroxylase CYP4F11</fullName>
        <ecNumber evidence="10">1.14.14.78</ecNumber>
    </alternativeName>
</protein>
<gene>
    <name evidence="14 23" type="primary">CYP4F11</name>
</gene>
<accession>Q9HBI6</accession>
<accession>A0A024R7G0</accession>
<accession>A8K059</accession>
<accession>O75254</accession>
<accession>Q96AQ5</accession>
<feature type="chain" id="PRO_0000051856" description="Cytochrome P450 4F11">
    <location>
        <begin position="1"/>
        <end position="524"/>
    </location>
</feature>
<feature type="transmembrane region" description="Helical" evidence="3">
    <location>
        <begin position="15"/>
        <end position="37"/>
    </location>
</feature>
<feature type="binding site" description="covalent" evidence="1">
    <location>
        <position position="328"/>
    </location>
    <ligand>
        <name>heme</name>
        <dbReference type="ChEBI" id="CHEBI:30413"/>
    </ligand>
</feature>
<feature type="binding site" description="axial binding residue" evidence="1">
    <location>
        <position position="468"/>
    </location>
    <ligand>
        <name>heme</name>
        <dbReference type="ChEBI" id="CHEBI:30413"/>
    </ligand>
    <ligandPart>
        <name>Fe</name>
        <dbReference type="ChEBI" id="CHEBI:18248"/>
    </ligandPart>
</feature>
<feature type="modified residue" description="4-hydroxynonenal-conjugated cysteine" evidence="12">
    <location>
        <position position="45"/>
    </location>
</feature>
<feature type="modified residue" description="4-hydroxynonenal-conjugated cysteine" evidence="12">
    <location>
        <position position="260"/>
    </location>
</feature>
<feature type="modified residue" description="4-hydroxynonenal-conjugated histidine" evidence="12">
    <location>
        <position position="261"/>
    </location>
</feature>
<feature type="modified residue" description="4-hydroxynonenal-conjugated histidine" evidence="12">
    <location>
        <position position="347"/>
    </location>
</feature>
<feature type="modified residue" description="4-hydroxynonenal-conjugated cysteine" evidence="12">
    <location>
        <position position="354"/>
    </location>
</feature>
<feature type="modified residue" description="4-hydroxynonenal-conjugated lysine" evidence="12">
    <location>
        <position position="451"/>
    </location>
</feature>
<feature type="sequence variant" id="VAR_060265" description="In dbSNP:rs57519667.">
    <original>R</original>
    <variation>C</variation>
    <location>
        <position position="146"/>
    </location>
</feature>
<feature type="sequence variant" id="VAR_060266" description="In dbSNP:rs8104361." evidence="4 5 7 13">
    <original>C</original>
    <variation>R</variation>
    <location>
        <position position="276"/>
    </location>
</feature>
<feature type="sequence variant" id="VAR_071198" description="Does not affect enzyme activity; dbSNP:rs1060463." evidence="4 5 7 10">
    <original>D</original>
    <variation>N</variation>
    <location>
        <position position="446"/>
    </location>
</feature>
<feature type="sequence conflict" description="In Ref. 2; BAF82113." evidence="16" ref="2">
    <original>F</original>
    <variation>L</variation>
    <location>
        <position position="458"/>
    </location>
</feature>
<feature type="sequence conflict" description="In Ref. 1; AAG15889." evidence="16" ref="1">
    <original>T</original>
    <variation>I</variation>
    <location>
        <position position="496"/>
    </location>
</feature>
<comment type="function">
    <text evidence="6 8 9 10 11 12">A cytochrome P450 monooxygenase involved in the metabolism of various endogenous substrates, including fatty acids and their oxygenated derivatives (oxylipins) (PubMed:15364545, PubMed:18065749, PubMed:24138531, PubMed:37373382). Mechanistically, uses molecular oxygen inserting one oxygen atom into a substrate, and reducing the second into a water molecule, with two electrons provided by NADPH via cytochrome P450 reductase (CPR; NADPH-ferrihemoprotein reductase) (PubMed:15364545, PubMed:18065749, PubMed:24138531, PubMed:37373382). Catalyzes with high efficiency the oxidation of the terminal carbon (omega-oxidation) of 3-hydroxy fatty acids, such as 3-hydroxyhexadecanoic and 3-hydroxyoctadecanoic acids, likely participating in the biosynthesis of long-chain 3-hydroxydicarboxylic acids (PubMed:18065749, PubMed:19932081). Omega-hydroxylates and inactivates phylloquinone (vitamin K1), and menaquinone-4 (MK-4, a form of vitamin K2), both acting as cofactors in blood coagulation (PubMed:24138531). Metabolizes with low efficiciency fatty acids, including (5Z,8Z,11Z,14Z)-eicosatetraenoic acid (arachidonate) and its oxygenated metabolite 8-hydroxyeicosatetraenoic acid (8-HETE) (PubMed:15364545, PubMed:19932081). Catalyzes N- and O-demethylation of drugs such as erythromycin, benzphetamine, ethylmorphine, chlorpromazine, imipramine and verapamil (PubMed:15364545). Catalyzes the oxidation of dialkylresorcinol 2 (PubMed:36565673).</text>
</comment>
<comment type="catalytic activity">
    <reaction evidence="6 8 9 10 12">
        <text>an organic molecule + reduced [NADPH--hemoprotein reductase] + O2 = an alcohol + oxidized [NADPH--hemoprotein reductase] + H2O + H(+)</text>
        <dbReference type="Rhea" id="RHEA:17149"/>
        <dbReference type="Rhea" id="RHEA-COMP:11964"/>
        <dbReference type="Rhea" id="RHEA-COMP:11965"/>
        <dbReference type="ChEBI" id="CHEBI:15377"/>
        <dbReference type="ChEBI" id="CHEBI:15378"/>
        <dbReference type="ChEBI" id="CHEBI:15379"/>
        <dbReference type="ChEBI" id="CHEBI:30879"/>
        <dbReference type="ChEBI" id="CHEBI:57618"/>
        <dbReference type="ChEBI" id="CHEBI:58210"/>
        <dbReference type="ChEBI" id="CHEBI:142491"/>
        <dbReference type="EC" id="1.14.14.1"/>
    </reaction>
    <physiologicalReaction direction="left-to-right" evidence="17 18 20">
        <dbReference type="Rhea" id="RHEA:17150"/>
    </physiologicalReaction>
</comment>
<comment type="catalytic activity">
    <reaction evidence="6 9 12">
        <text>an omega-methyl-long-chain fatty acid + reduced [NADPH--hemoprotein reductase] + O2 = an omega-hydroxy-long-chain fatty acid + oxidized [NADPH--hemoprotein reductase] + H2O + H(+)</text>
        <dbReference type="Rhea" id="RHEA:56748"/>
        <dbReference type="Rhea" id="RHEA-COMP:11964"/>
        <dbReference type="Rhea" id="RHEA-COMP:11965"/>
        <dbReference type="ChEBI" id="CHEBI:15377"/>
        <dbReference type="ChEBI" id="CHEBI:15378"/>
        <dbReference type="ChEBI" id="CHEBI:15379"/>
        <dbReference type="ChEBI" id="CHEBI:57618"/>
        <dbReference type="ChEBI" id="CHEBI:58210"/>
        <dbReference type="ChEBI" id="CHEBI:140991"/>
        <dbReference type="ChEBI" id="CHEBI:140992"/>
        <dbReference type="EC" id="1.14.14.80"/>
    </reaction>
    <physiologicalReaction direction="left-to-right" evidence="19">
        <dbReference type="Rhea" id="RHEA:56749"/>
    </physiologicalReaction>
</comment>
<comment type="catalytic activity">
    <reaction evidence="8">
        <text>dodecanoate + reduced [NADPH--hemoprotein reductase] + O2 = 12-hydroxydodecanoate + oxidized [NADPH--hemoprotein reductase] + H2O + H(+)</text>
        <dbReference type="Rhea" id="RHEA:38947"/>
        <dbReference type="Rhea" id="RHEA-COMP:11964"/>
        <dbReference type="Rhea" id="RHEA-COMP:11965"/>
        <dbReference type="ChEBI" id="CHEBI:15377"/>
        <dbReference type="ChEBI" id="CHEBI:15378"/>
        <dbReference type="ChEBI" id="CHEBI:15379"/>
        <dbReference type="ChEBI" id="CHEBI:18262"/>
        <dbReference type="ChEBI" id="CHEBI:36204"/>
        <dbReference type="ChEBI" id="CHEBI:57618"/>
        <dbReference type="ChEBI" id="CHEBI:58210"/>
    </reaction>
    <physiologicalReaction direction="left-to-right" evidence="18">
        <dbReference type="Rhea" id="RHEA:38948"/>
    </physiologicalReaction>
</comment>
<comment type="catalytic activity">
    <reaction evidence="9 12">
        <text>hexadecanoate + reduced [NADPH--hemoprotein reductase] + O2 = 16-hydroxyhexadecanoate + oxidized [NADPH--hemoprotein reductase] + H2O + H(+)</text>
        <dbReference type="Rhea" id="RHEA:40199"/>
        <dbReference type="Rhea" id="RHEA-COMP:11964"/>
        <dbReference type="Rhea" id="RHEA-COMP:11965"/>
        <dbReference type="ChEBI" id="CHEBI:7896"/>
        <dbReference type="ChEBI" id="CHEBI:15377"/>
        <dbReference type="ChEBI" id="CHEBI:15378"/>
        <dbReference type="ChEBI" id="CHEBI:15379"/>
        <dbReference type="ChEBI" id="CHEBI:55329"/>
        <dbReference type="ChEBI" id="CHEBI:57618"/>
        <dbReference type="ChEBI" id="CHEBI:58210"/>
        <dbReference type="EC" id="1.14.14.80"/>
    </reaction>
    <physiologicalReaction direction="left-to-right" evidence="19 21">
        <dbReference type="Rhea" id="RHEA:40200"/>
    </physiologicalReaction>
</comment>
<comment type="catalytic activity">
    <reaction evidence="9">
        <text>(9Z)-octadecenoate + reduced [NADPH--hemoprotein reductase] + O2 = 18-hydroxy-(9Z)-octadecenoate + oxidized [NADPH--hemoprotein reductase] + H2O + H(+)</text>
        <dbReference type="Rhea" id="RHEA:41728"/>
        <dbReference type="Rhea" id="RHEA-COMP:11964"/>
        <dbReference type="Rhea" id="RHEA-COMP:11965"/>
        <dbReference type="ChEBI" id="CHEBI:15377"/>
        <dbReference type="ChEBI" id="CHEBI:15378"/>
        <dbReference type="ChEBI" id="CHEBI:15379"/>
        <dbReference type="ChEBI" id="CHEBI:30823"/>
        <dbReference type="ChEBI" id="CHEBI:57618"/>
        <dbReference type="ChEBI" id="CHEBI:58210"/>
        <dbReference type="ChEBI" id="CHEBI:78424"/>
        <dbReference type="EC" id="1.14.14.80"/>
    </reaction>
    <physiologicalReaction direction="left-to-right" evidence="19">
        <dbReference type="Rhea" id="RHEA:41729"/>
    </physiologicalReaction>
</comment>
<comment type="catalytic activity">
    <reaction evidence="6 12">
        <text>(5Z,8Z,11Z,14Z)-eicosatetraenoate + reduced [NADPH--hemoprotein reductase] + O2 = 20-hydroxy-(5Z,8Z,11Z,14Z)-eicosatetraenoate + oxidized [NADPH--hemoprotein reductase] + H2O + H(+)</text>
        <dbReference type="Rhea" id="RHEA:39755"/>
        <dbReference type="Rhea" id="RHEA-COMP:11964"/>
        <dbReference type="Rhea" id="RHEA-COMP:11965"/>
        <dbReference type="ChEBI" id="CHEBI:15377"/>
        <dbReference type="ChEBI" id="CHEBI:15378"/>
        <dbReference type="ChEBI" id="CHEBI:15379"/>
        <dbReference type="ChEBI" id="CHEBI:32395"/>
        <dbReference type="ChEBI" id="CHEBI:57618"/>
        <dbReference type="ChEBI" id="CHEBI:58210"/>
        <dbReference type="ChEBI" id="CHEBI:76624"/>
    </reaction>
    <physiologicalReaction direction="left-to-right" evidence="17 21">
        <dbReference type="Rhea" id="RHEA:39756"/>
    </physiologicalReaction>
</comment>
<comment type="catalytic activity">
    <reaction evidence="9">
        <text>(4Z,7Z,10Z,13Z,16Z,19Z)-docosahexaenoate + reduced [NADPH--hemoprotein reductase] + O2 = 22-hydroxy-(4Z,7Z,10Z,13Z,16Z,19Z)-docosahexaenoate + oxidized [NADPH--hemoprotein reductase] + H2O + H(+)</text>
        <dbReference type="Rhea" id="RHEA:40155"/>
        <dbReference type="Rhea" id="RHEA-COMP:11964"/>
        <dbReference type="Rhea" id="RHEA-COMP:11965"/>
        <dbReference type="ChEBI" id="CHEBI:15377"/>
        <dbReference type="ChEBI" id="CHEBI:15378"/>
        <dbReference type="ChEBI" id="CHEBI:15379"/>
        <dbReference type="ChEBI" id="CHEBI:57618"/>
        <dbReference type="ChEBI" id="CHEBI:58210"/>
        <dbReference type="ChEBI" id="CHEBI:77015"/>
        <dbReference type="ChEBI" id="CHEBI:77016"/>
        <dbReference type="EC" id="1.14.14.79"/>
    </reaction>
    <physiologicalReaction direction="left-to-right" evidence="19">
        <dbReference type="Rhea" id="RHEA:40156"/>
    </physiologicalReaction>
</comment>
<comment type="catalytic activity">
    <reaction evidence="6">
        <text>8-hydroxy-(5Z,9E,11Z,14Z)-eicosatetraenoate + reduced [NADPH--hemoprotein reductase] + O2 = 8,20-dihydroxy-(5Z,9E,11Z,14Z)-eicosatetraenoate + oxidized [NADPH--hemoprotein reductase] + H2O + H(+)</text>
        <dbReference type="Rhea" id="RHEA:48660"/>
        <dbReference type="Rhea" id="RHEA-COMP:11964"/>
        <dbReference type="Rhea" id="RHEA-COMP:11965"/>
        <dbReference type="ChEBI" id="CHEBI:15377"/>
        <dbReference type="ChEBI" id="CHEBI:15378"/>
        <dbReference type="ChEBI" id="CHEBI:15379"/>
        <dbReference type="ChEBI" id="CHEBI:57618"/>
        <dbReference type="ChEBI" id="CHEBI:58210"/>
        <dbReference type="ChEBI" id="CHEBI:90716"/>
        <dbReference type="ChEBI" id="CHEBI:90717"/>
    </reaction>
    <physiologicalReaction direction="left-to-right" evidence="17">
        <dbReference type="Rhea" id="RHEA:48661"/>
    </physiologicalReaction>
</comment>
<comment type="catalytic activity">
    <reaction evidence="8 9">
        <text>3-hydroxyhexadecanoate + reduced [NADPH--hemoprotein reductase] + O2 = 3,16-dihydroxyhexadecanoate + oxidized [NADPH--hemoprotein reductase] + H2O + H(+)</text>
        <dbReference type="Rhea" id="RHEA:39731"/>
        <dbReference type="Rhea" id="RHEA-COMP:11964"/>
        <dbReference type="Rhea" id="RHEA-COMP:11965"/>
        <dbReference type="ChEBI" id="CHEBI:15377"/>
        <dbReference type="ChEBI" id="CHEBI:15378"/>
        <dbReference type="ChEBI" id="CHEBI:15379"/>
        <dbReference type="ChEBI" id="CHEBI:57618"/>
        <dbReference type="ChEBI" id="CHEBI:58210"/>
        <dbReference type="ChEBI" id="CHEBI:63904"/>
        <dbReference type="ChEBI" id="CHEBI:76613"/>
    </reaction>
    <physiologicalReaction direction="left-to-right" evidence="18 19">
        <dbReference type="Rhea" id="RHEA:39732"/>
    </physiologicalReaction>
</comment>
<comment type="catalytic activity">
    <reaction evidence="8">
        <text>3-hydroxyoctadecanoate + reduced [NADPH--hemoprotein reductase] + O2 = 3,18-dihydroxyoctadecanoate + oxidized [NADPH--hemoprotein reductase] + H2O + H(+)</text>
        <dbReference type="Rhea" id="RHEA:39735"/>
        <dbReference type="Rhea" id="RHEA-COMP:11964"/>
        <dbReference type="Rhea" id="RHEA-COMP:11965"/>
        <dbReference type="ChEBI" id="CHEBI:15377"/>
        <dbReference type="ChEBI" id="CHEBI:15378"/>
        <dbReference type="ChEBI" id="CHEBI:15379"/>
        <dbReference type="ChEBI" id="CHEBI:57618"/>
        <dbReference type="ChEBI" id="CHEBI:58210"/>
        <dbReference type="ChEBI" id="CHEBI:76614"/>
        <dbReference type="ChEBI" id="CHEBI:76615"/>
    </reaction>
    <physiologicalReaction direction="left-to-right" evidence="18">
        <dbReference type="Rhea" id="RHEA:39736"/>
    </physiologicalReaction>
</comment>
<comment type="catalytic activity">
    <reaction evidence="10">
        <text>phylloquinone + reduced [NADPH--hemoprotein reductase] + O2 = omega-hydroxyphylloquinone + oxidized [NADPH--hemoprotein reductase] + H2O + H(+)</text>
        <dbReference type="Rhea" id="RHEA:41516"/>
        <dbReference type="Rhea" id="RHEA-COMP:11964"/>
        <dbReference type="Rhea" id="RHEA-COMP:11965"/>
        <dbReference type="ChEBI" id="CHEBI:15377"/>
        <dbReference type="ChEBI" id="CHEBI:15378"/>
        <dbReference type="ChEBI" id="CHEBI:15379"/>
        <dbReference type="ChEBI" id="CHEBI:18067"/>
        <dbReference type="ChEBI" id="CHEBI:57618"/>
        <dbReference type="ChEBI" id="CHEBI:58210"/>
        <dbReference type="ChEBI" id="CHEBI:78276"/>
        <dbReference type="EC" id="1.14.14.78"/>
    </reaction>
    <physiologicalReaction direction="left-to-right" evidence="20">
        <dbReference type="Rhea" id="RHEA:41517"/>
    </physiologicalReaction>
</comment>
<comment type="catalytic activity">
    <reaction evidence="10">
        <text>menaquinone-4 + reduced [NADPH--hemoprotein reductase] + O2 = omega-hydroxymenaquinone-4 + oxidized [NADPH--hemoprotein reductase] + H2O + H(+)</text>
        <dbReference type="Rhea" id="RHEA:41520"/>
        <dbReference type="Rhea" id="RHEA-COMP:11964"/>
        <dbReference type="Rhea" id="RHEA-COMP:11965"/>
        <dbReference type="ChEBI" id="CHEBI:15377"/>
        <dbReference type="ChEBI" id="CHEBI:15378"/>
        <dbReference type="ChEBI" id="CHEBI:15379"/>
        <dbReference type="ChEBI" id="CHEBI:57618"/>
        <dbReference type="ChEBI" id="CHEBI:58210"/>
        <dbReference type="ChEBI" id="CHEBI:78277"/>
        <dbReference type="ChEBI" id="CHEBI:78278"/>
        <dbReference type="EC" id="1.14.14.78"/>
    </reaction>
    <physiologicalReaction direction="left-to-right" evidence="20">
        <dbReference type="Rhea" id="RHEA:41521"/>
    </physiologicalReaction>
</comment>
<comment type="catalytic activity">
    <reaction evidence="11">
        <text>2-hexyl-5-pentylresorcinol + reduced [NADPH--hemoprotein reductase] + O2 = 2-hexyl-5-(5-hydroxypentyl)resorcinol + oxidized [NADPH--hemoprotein reductase] + H2O + H(+)</text>
        <dbReference type="Rhea" id="RHEA:76895"/>
        <dbReference type="Rhea" id="RHEA-COMP:11964"/>
        <dbReference type="Rhea" id="RHEA-COMP:11965"/>
        <dbReference type="ChEBI" id="CHEBI:15377"/>
        <dbReference type="ChEBI" id="CHEBI:15378"/>
        <dbReference type="ChEBI" id="CHEBI:15379"/>
        <dbReference type="ChEBI" id="CHEBI:57618"/>
        <dbReference type="ChEBI" id="CHEBI:58210"/>
        <dbReference type="ChEBI" id="CHEBI:195466"/>
        <dbReference type="ChEBI" id="CHEBI:195467"/>
    </reaction>
</comment>
<comment type="catalytic activity">
    <reaction evidence="11">
        <text>2-hexyl-5-heptylresorcinol + reduced [NADPH--hemoprotein reductase] + O2 = 2-hexyl-5-(7-hydroxyheptyl)resorcinol + oxidized [NADPH--hemoprotein reductase] + H2O + H(+)</text>
        <dbReference type="Rhea" id="RHEA:76963"/>
        <dbReference type="Rhea" id="RHEA-COMP:11964"/>
        <dbReference type="Rhea" id="RHEA-COMP:11965"/>
        <dbReference type="ChEBI" id="CHEBI:15377"/>
        <dbReference type="ChEBI" id="CHEBI:15378"/>
        <dbReference type="ChEBI" id="CHEBI:15379"/>
        <dbReference type="ChEBI" id="CHEBI:57618"/>
        <dbReference type="ChEBI" id="CHEBI:58210"/>
        <dbReference type="ChEBI" id="CHEBI:195468"/>
        <dbReference type="ChEBI" id="CHEBI:195469"/>
    </reaction>
</comment>
<comment type="catalytic activity">
    <reaction evidence="21">
        <text>12-hydroxy-(5Z,8Z,10E,14Z)-eicosatetraenoate + reduced [NADPH--hemoprotein reductase] + O2 = 12,20-dihydroxy-(5Z,8Z,10E,14Z)-eicosatetraenoate + oxidized [NADPH--hemoprotein reductase] + H2O + H(+)</text>
        <dbReference type="Rhea" id="RHEA:48664"/>
        <dbReference type="Rhea" id="RHEA-COMP:11964"/>
        <dbReference type="Rhea" id="RHEA-COMP:11965"/>
        <dbReference type="ChEBI" id="CHEBI:15377"/>
        <dbReference type="ChEBI" id="CHEBI:15378"/>
        <dbReference type="ChEBI" id="CHEBI:15379"/>
        <dbReference type="ChEBI" id="CHEBI:57618"/>
        <dbReference type="ChEBI" id="CHEBI:58210"/>
        <dbReference type="ChEBI" id="CHEBI:90718"/>
        <dbReference type="ChEBI" id="CHEBI:90719"/>
    </reaction>
    <physiologicalReaction direction="left-to-right" evidence="21">
        <dbReference type="Rhea" id="RHEA:48665"/>
    </physiologicalReaction>
</comment>
<comment type="catalytic activity">
    <reaction evidence="21">
        <text>15-hydroxy-(5Z,8Z,11Z,13E)-eicosatetraenoate + reduced [NADPH--hemoprotein reductase] + O2 = 15,20-dihydroxy-(5Z,8Z,11Z,13E)-eicosatetraenoate + oxidized [NADPH--hemoprotein reductase] + H2O + H(+)</text>
        <dbReference type="Rhea" id="RHEA:78611"/>
        <dbReference type="Rhea" id="RHEA-COMP:11964"/>
        <dbReference type="Rhea" id="RHEA-COMP:11965"/>
        <dbReference type="ChEBI" id="CHEBI:15377"/>
        <dbReference type="ChEBI" id="CHEBI:15378"/>
        <dbReference type="ChEBI" id="CHEBI:15379"/>
        <dbReference type="ChEBI" id="CHEBI:57618"/>
        <dbReference type="ChEBI" id="CHEBI:58210"/>
        <dbReference type="ChEBI" id="CHEBI:78832"/>
        <dbReference type="ChEBI" id="CHEBI:229486"/>
    </reaction>
</comment>
<comment type="cofactor">
    <cofactor evidence="2">
        <name>heme</name>
        <dbReference type="ChEBI" id="CHEBI:30413"/>
    </cofactor>
</comment>
<comment type="activity regulation">
    <text evidence="12">Inhibition of the long-chain fatty acid omega-monooxygenase activity by 4-hydroxynonenal (4-HNE) conjugation.</text>
</comment>
<comment type="biophysicochemical properties">
    <kinetics>
        <KM evidence="9">47 uM for hexadecanoic acid</KM>
        <KM evidence="9">85 uM for (9Z)-octadecenoic acid (oleate)</KM>
        <KM evidence="9">80 uM for (5Z,8Z,11Z,14Z)-eicosatetraenoic acid</KM>
        <KM evidence="9">48 uM for (4Z,7Z,10Z,13Z,16Z,19Z)-docosahexaenoic acid</KM>
        <KM evidence="9">74 uM for 3-hydroxyhexadecanoic acid</KM>
        <KM evidence="8">105.8 uM for 3-hydroxyhexadecanoic acid</KM>
        <KM evidence="8">53.5 uM for 3-hydroxyoctadecanoic acid</KM>
        <KM evidence="10">2.4 uM for menaquinone-4 (MK-4)</KM>
        <KM evidence="6">125 uM for erythromycin</KM>
        <Vmax evidence="6">830.0 pmol/min/ng enzyme with erythromycin as substrate</Vmax>
        <text evidence="9 10">kcat is 0.088 min(-1) with menaquinone-4 (MK-4) as substrate (PubMed:24138531). kcat is 1.8 min(-1) with hexadecanoic acid as substrate. kcat is 1.0 min(-1) with (9Z)-octadecenoic acid as substrate. kcat is 0.54 min(-1) with (5Z,8Z,11Z,14Z)-eicosatetraenoic acid (arachidonate) as substrate. kcat is 0.35 min(-1) with (4Z,7Z,10Z,13Z,16Z,19Z)-docosahexaenoic acid as substrate. kcat is 27.5 min(-1) with 3-hydroxyhexadecanoic acid as substrate (PubMed:19932081).</text>
    </kinetics>
</comment>
<comment type="pathway">
    <text evidence="6">Lipid metabolism; arachidonate metabolism.</text>
</comment>
<comment type="pathway">
    <text evidence="6">Lipid metabolism; oxylipin biosynthesis.</text>
</comment>
<comment type="pathway">
    <text evidence="10">Cofactor degradation; phylloquinone degradation.</text>
</comment>
<comment type="pathway">
    <text evidence="6">Xenobiotic degradation.</text>
</comment>
<comment type="interaction">
    <interactant intactId="EBI-3924028">
        <id>Q9HBI6</id>
    </interactant>
    <interactant intactId="EBI-6165891">
        <id>Q14696</id>
        <label>MESD</label>
    </interactant>
    <organismsDiffer>false</organismsDiffer>
    <experiments>3</experiments>
</comment>
<comment type="subcellular location">
    <subcellularLocation>
        <location evidence="8">Endoplasmic reticulum membrane</location>
        <topology evidence="16">Single-pass membrane protein</topology>
    </subcellularLocation>
    <subcellularLocation>
        <location evidence="8">Microsome membrane</location>
        <topology evidence="16">Single-pass membrane protein</topology>
    </subcellularLocation>
</comment>
<comment type="tissue specificity">
    <text evidence="4 10">Expressed mainly in human liver, followed by kidney, heart, and skeletal muscle.</text>
</comment>
<comment type="PTM">
    <text evidence="12">4-hydroxynonenal conjugation impairs substrate binding and the long-chain fatty acid omega-monooxygenase activity.</text>
</comment>
<comment type="similarity">
    <text evidence="16">Belongs to the cytochrome P450 family.</text>
</comment>
<comment type="sequence caution" evidence="16">
    <conflict type="erroneous gene model prediction">
        <sequence resource="EMBL-CDS" id="AAC27731"/>
    </conflict>
</comment>
<reference key="1">
    <citation type="journal article" date="2000" name="Genomics">
        <title>A novel human cytochrome P450 4F isoform (CYP4F11): cDNA cloning, expression, and genomic structural characterization.</title>
        <authorList>
            <person name="Cui X."/>
            <person name="Nelson D.R."/>
            <person name="Strobel H.W."/>
        </authorList>
    </citation>
    <scope>NUCLEOTIDE SEQUENCE [MRNA]</scope>
    <scope>TISSUE SPECIFICITY</scope>
    <scope>VARIANTS ARG-276 AND ASN-446</scope>
    <source>
        <tissue>Brain</tissue>
        <tissue>Liver</tissue>
    </source>
</reference>
<reference key="2">
    <citation type="journal article" date="2004" name="Nat. Genet.">
        <title>Complete sequencing and characterization of 21,243 full-length human cDNAs.</title>
        <authorList>
            <person name="Ota T."/>
            <person name="Suzuki Y."/>
            <person name="Nishikawa T."/>
            <person name="Otsuki T."/>
            <person name="Sugiyama T."/>
            <person name="Irie R."/>
            <person name="Wakamatsu A."/>
            <person name="Hayashi K."/>
            <person name="Sato H."/>
            <person name="Nagai K."/>
            <person name="Kimura K."/>
            <person name="Makita H."/>
            <person name="Sekine M."/>
            <person name="Obayashi M."/>
            <person name="Nishi T."/>
            <person name="Shibahara T."/>
            <person name="Tanaka T."/>
            <person name="Ishii S."/>
            <person name="Yamamoto J."/>
            <person name="Saito K."/>
            <person name="Kawai Y."/>
            <person name="Isono Y."/>
            <person name="Nakamura Y."/>
            <person name="Nagahari K."/>
            <person name="Murakami K."/>
            <person name="Yasuda T."/>
            <person name="Iwayanagi T."/>
            <person name="Wagatsuma M."/>
            <person name="Shiratori A."/>
            <person name="Sudo H."/>
            <person name="Hosoiri T."/>
            <person name="Kaku Y."/>
            <person name="Kodaira H."/>
            <person name="Kondo H."/>
            <person name="Sugawara M."/>
            <person name="Takahashi M."/>
            <person name="Kanda K."/>
            <person name="Yokoi T."/>
            <person name="Furuya T."/>
            <person name="Kikkawa E."/>
            <person name="Omura Y."/>
            <person name="Abe K."/>
            <person name="Kamihara K."/>
            <person name="Katsuta N."/>
            <person name="Sato K."/>
            <person name="Tanikawa M."/>
            <person name="Yamazaki M."/>
            <person name="Ninomiya K."/>
            <person name="Ishibashi T."/>
            <person name="Yamashita H."/>
            <person name="Murakawa K."/>
            <person name="Fujimori K."/>
            <person name="Tanai H."/>
            <person name="Kimata M."/>
            <person name="Watanabe M."/>
            <person name="Hiraoka S."/>
            <person name="Chiba Y."/>
            <person name="Ishida S."/>
            <person name="Ono Y."/>
            <person name="Takiguchi S."/>
            <person name="Watanabe S."/>
            <person name="Yosida M."/>
            <person name="Hotuta T."/>
            <person name="Kusano J."/>
            <person name="Kanehori K."/>
            <person name="Takahashi-Fujii A."/>
            <person name="Hara H."/>
            <person name="Tanase T.-O."/>
            <person name="Nomura Y."/>
            <person name="Togiya S."/>
            <person name="Komai F."/>
            <person name="Hara R."/>
            <person name="Takeuchi K."/>
            <person name="Arita M."/>
            <person name="Imose N."/>
            <person name="Musashino K."/>
            <person name="Yuuki H."/>
            <person name="Oshima A."/>
            <person name="Sasaki N."/>
            <person name="Aotsuka S."/>
            <person name="Yoshikawa Y."/>
            <person name="Matsunawa H."/>
            <person name="Ichihara T."/>
            <person name="Shiohata N."/>
            <person name="Sano S."/>
            <person name="Moriya S."/>
            <person name="Momiyama H."/>
            <person name="Satoh N."/>
            <person name="Takami S."/>
            <person name="Terashima Y."/>
            <person name="Suzuki O."/>
            <person name="Nakagawa S."/>
            <person name="Senoh A."/>
            <person name="Mizoguchi H."/>
            <person name="Goto Y."/>
            <person name="Shimizu F."/>
            <person name="Wakebe H."/>
            <person name="Hishigaki H."/>
            <person name="Watanabe T."/>
            <person name="Sugiyama A."/>
            <person name="Takemoto M."/>
            <person name="Kawakami B."/>
            <person name="Yamazaki M."/>
            <person name="Watanabe K."/>
            <person name="Kumagai A."/>
            <person name="Itakura S."/>
            <person name="Fukuzumi Y."/>
            <person name="Fujimori Y."/>
            <person name="Komiyama M."/>
            <person name="Tashiro H."/>
            <person name="Tanigami A."/>
            <person name="Fujiwara T."/>
            <person name="Ono T."/>
            <person name="Yamada K."/>
            <person name="Fujii Y."/>
            <person name="Ozaki K."/>
            <person name="Hirao M."/>
            <person name="Ohmori Y."/>
            <person name="Kawabata A."/>
            <person name="Hikiji T."/>
            <person name="Kobatake N."/>
            <person name="Inagaki H."/>
            <person name="Ikema Y."/>
            <person name="Okamoto S."/>
            <person name="Okitani R."/>
            <person name="Kawakami T."/>
            <person name="Noguchi S."/>
            <person name="Itoh T."/>
            <person name="Shigeta K."/>
            <person name="Senba T."/>
            <person name="Matsumura K."/>
            <person name="Nakajima Y."/>
            <person name="Mizuno T."/>
            <person name="Morinaga M."/>
            <person name="Sasaki M."/>
            <person name="Togashi T."/>
            <person name="Oyama M."/>
            <person name="Hata H."/>
            <person name="Watanabe M."/>
            <person name="Komatsu T."/>
            <person name="Mizushima-Sugano J."/>
            <person name="Satoh T."/>
            <person name="Shirai Y."/>
            <person name="Takahashi Y."/>
            <person name="Nakagawa K."/>
            <person name="Okumura K."/>
            <person name="Nagase T."/>
            <person name="Nomura N."/>
            <person name="Kikuchi H."/>
            <person name="Masuho Y."/>
            <person name="Yamashita R."/>
            <person name="Nakai K."/>
            <person name="Yada T."/>
            <person name="Nakamura Y."/>
            <person name="Ohara O."/>
            <person name="Isogai T."/>
            <person name="Sugano S."/>
        </authorList>
    </citation>
    <scope>NUCLEOTIDE SEQUENCE [LARGE SCALE MRNA]</scope>
    <scope>VARIANTS ARG-276 AND ASN-446</scope>
    <source>
        <tissue evidence="22">Mammary gland</tissue>
    </source>
</reference>
<reference key="3">
    <citation type="journal article" date="2004" name="Nature">
        <title>The DNA sequence and biology of human chromosome 19.</title>
        <authorList>
            <person name="Grimwood J."/>
            <person name="Gordon L.A."/>
            <person name="Olsen A.S."/>
            <person name="Terry A."/>
            <person name="Schmutz J."/>
            <person name="Lamerdin J.E."/>
            <person name="Hellsten U."/>
            <person name="Goodstein D."/>
            <person name="Couronne O."/>
            <person name="Tran-Gyamfi M."/>
            <person name="Aerts A."/>
            <person name="Altherr M."/>
            <person name="Ashworth L."/>
            <person name="Bajorek E."/>
            <person name="Black S."/>
            <person name="Branscomb E."/>
            <person name="Caenepeel S."/>
            <person name="Carrano A.V."/>
            <person name="Caoile C."/>
            <person name="Chan Y.M."/>
            <person name="Christensen M."/>
            <person name="Cleland C.A."/>
            <person name="Copeland A."/>
            <person name="Dalin E."/>
            <person name="Dehal P."/>
            <person name="Denys M."/>
            <person name="Detter J.C."/>
            <person name="Escobar J."/>
            <person name="Flowers D."/>
            <person name="Fotopulos D."/>
            <person name="Garcia C."/>
            <person name="Georgescu A.M."/>
            <person name="Glavina T."/>
            <person name="Gomez M."/>
            <person name="Gonzales E."/>
            <person name="Groza M."/>
            <person name="Hammon N."/>
            <person name="Hawkins T."/>
            <person name="Haydu L."/>
            <person name="Ho I."/>
            <person name="Huang W."/>
            <person name="Israni S."/>
            <person name="Jett J."/>
            <person name="Kadner K."/>
            <person name="Kimball H."/>
            <person name="Kobayashi A."/>
            <person name="Larionov V."/>
            <person name="Leem S.-H."/>
            <person name="Lopez F."/>
            <person name="Lou Y."/>
            <person name="Lowry S."/>
            <person name="Malfatti S."/>
            <person name="Martinez D."/>
            <person name="McCready P.M."/>
            <person name="Medina C."/>
            <person name="Morgan J."/>
            <person name="Nelson K."/>
            <person name="Nolan M."/>
            <person name="Ovcharenko I."/>
            <person name="Pitluck S."/>
            <person name="Pollard M."/>
            <person name="Popkie A.P."/>
            <person name="Predki P."/>
            <person name="Quan G."/>
            <person name="Ramirez L."/>
            <person name="Rash S."/>
            <person name="Retterer J."/>
            <person name="Rodriguez A."/>
            <person name="Rogers S."/>
            <person name="Salamov A."/>
            <person name="Salazar A."/>
            <person name="She X."/>
            <person name="Smith D."/>
            <person name="Slezak T."/>
            <person name="Solovyev V."/>
            <person name="Thayer N."/>
            <person name="Tice H."/>
            <person name="Tsai M."/>
            <person name="Ustaszewska A."/>
            <person name="Vo N."/>
            <person name="Wagner M."/>
            <person name="Wheeler J."/>
            <person name="Wu K."/>
            <person name="Xie G."/>
            <person name="Yang J."/>
            <person name="Dubchak I."/>
            <person name="Furey T.S."/>
            <person name="DeJong P."/>
            <person name="Dickson M."/>
            <person name="Gordon D."/>
            <person name="Eichler E.E."/>
            <person name="Pennacchio L.A."/>
            <person name="Richardson P."/>
            <person name="Stubbs L."/>
            <person name="Rokhsar D.S."/>
            <person name="Myers R.M."/>
            <person name="Rubin E.M."/>
            <person name="Lucas S.M."/>
        </authorList>
    </citation>
    <scope>NUCLEOTIDE SEQUENCE [LARGE SCALE GENOMIC DNA]</scope>
</reference>
<reference key="4">
    <citation type="submission" date="2005-07" db="EMBL/GenBank/DDBJ databases">
        <authorList>
            <person name="Mural R.J."/>
            <person name="Istrail S."/>
            <person name="Sutton G.G."/>
            <person name="Florea L."/>
            <person name="Halpern A.L."/>
            <person name="Mobarry C.M."/>
            <person name="Lippert R."/>
            <person name="Walenz B."/>
            <person name="Shatkay H."/>
            <person name="Dew I."/>
            <person name="Miller J.R."/>
            <person name="Flanigan M.J."/>
            <person name="Edwards N.J."/>
            <person name="Bolanos R."/>
            <person name="Fasulo D."/>
            <person name="Halldorsson B.V."/>
            <person name="Hannenhalli S."/>
            <person name="Turner R."/>
            <person name="Yooseph S."/>
            <person name="Lu F."/>
            <person name="Nusskern D.R."/>
            <person name="Shue B.C."/>
            <person name="Zheng X.H."/>
            <person name="Zhong F."/>
            <person name="Delcher A.L."/>
            <person name="Huson D.H."/>
            <person name="Kravitz S.A."/>
            <person name="Mouchard L."/>
            <person name="Reinert K."/>
            <person name="Remington K.A."/>
            <person name="Clark A.G."/>
            <person name="Waterman M.S."/>
            <person name="Eichler E.E."/>
            <person name="Adams M.D."/>
            <person name="Hunkapiller M.W."/>
            <person name="Myers E.W."/>
            <person name="Venter J.C."/>
        </authorList>
    </citation>
    <scope>NUCLEOTIDE SEQUENCE [LARGE SCALE GENOMIC DNA]</scope>
    <scope>VARIANT ARG-276</scope>
</reference>
<reference key="5">
    <citation type="journal article" date="2004" name="Genome Res.">
        <title>The status, quality, and expansion of the NIH full-length cDNA project: the Mammalian Gene Collection (MGC).</title>
        <authorList>
            <consortium name="The MGC Project Team"/>
        </authorList>
    </citation>
    <scope>NUCLEOTIDE SEQUENCE [LARGE SCALE MRNA]</scope>
    <scope>VARIANTS ARG-276 AND ASN-446</scope>
    <source>
        <tissue>Colon</tissue>
    </source>
</reference>
<reference key="6">
    <citation type="journal article" date="2004" name="Toxicol. Appl. Pharmacol.">
        <title>Expression and characterization of human cytochrome P450 4F11: Putative role in the metabolism of therapeutic drugs and eicosanoids.</title>
        <authorList>
            <person name="Kalsotra A."/>
            <person name="Turman C.M."/>
            <person name="Kikuta Y."/>
            <person name="Strobel H.W."/>
        </authorList>
    </citation>
    <scope>FUNCTION</scope>
    <scope>CATALYTIC ACTIVITY</scope>
    <scope>BIOPHYSICOCHEMICAL PROPERTIES</scope>
    <scope>PATHWAY</scope>
</reference>
<reference key="7">
    <citation type="journal article" date="2008" name="J. Lipid Res.">
        <title>Omega oxidation of 3-hydroxy fatty acids by the human CYP4F gene subfamily enzyme CYP4F11.</title>
        <authorList>
            <person name="Dhar M."/>
            <person name="Sepkovic D.W."/>
            <person name="Hirani V."/>
            <person name="Magnusson R.P."/>
            <person name="Lasker J.M."/>
        </authorList>
    </citation>
    <scope>FUNCTION</scope>
    <scope>CATALYTIC ACTIVITY</scope>
    <scope>SUBCELLULAR LOCATION</scope>
    <scope>BIOPHYSICOCHEMICAL PROPERTIES</scope>
    <scope>PATHWAY</scope>
</reference>
<reference key="8">
    <citation type="journal article" date="2010" name="Arch. Biochem. Biophys.">
        <title>Human cytochrome P450 4F11: heterologous expression in bacteria, purification, and characterization of catalytic function.</title>
        <authorList>
            <person name="Tang Z."/>
            <person name="Salamanca-Pinzon S.G."/>
            <person name="Wu Z.L."/>
            <person name="Xiao Y."/>
            <person name="Guengerich F.P."/>
        </authorList>
    </citation>
    <scope>FUNCTION</scope>
    <scope>CATALYTIC ACTIVITY</scope>
    <scope>BIOPHYSICOCHEMICAL PROPERTIES</scope>
    <scope>PATHWAY</scope>
</reference>
<reference key="9">
    <citation type="journal article" date="2013" name="Biochemistry">
        <title>Cytochrome P450-dependent catabolism of vitamin K: omega-hydroxylation catalyzed by human CYP4F2 and CYP4F11.</title>
        <authorList>
            <person name="Edson K.Z."/>
            <person name="Prasad B."/>
            <person name="Unadkat J.D."/>
            <person name="Suhara Y."/>
            <person name="Okano T."/>
            <person name="Guengerich F.P."/>
            <person name="Rettie A.E."/>
        </authorList>
    </citation>
    <scope>FUNCTION</scope>
    <scope>CATALYTIC ACTIVITY</scope>
    <scope>BIOPHYSICOCHEMICAL PROPERTIES</scope>
    <scope>TISSUE SPECIFICITY</scope>
    <scope>IDENTIFICATION BY MASS SPECTROMETRY</scope>
    <scope>PATHWAY</scope>
    <scope>CHARACTERIZATION OF VARIANT ASN-446</scope>
</reference>
<reference key="10">
    <citation type="journal article" date="2014" name="J. Proteomics">
        <title>An enzyme assisted RP-RPLC approach for in-depth analysis of human liver phosphoproteome.</title>
        <authorList>
            <person name="Bian Y."/>
            <person name="Song C."/>
            <person name="Cheng K."/>
            <person name="Dong M."/>
            <person name="Wang F."/>
            <person name="Huang J."/>
            <person name="Sun D."/>
            <person name="Wang L."/>
            <person name="Ye M."/>
            <person name="Zou H."/>
        </authorList>
    </citation>
    <scope>IDENTIFICATION BY MASS SPECTROMETRY [LARGE SCALE ANALYSIS]</scope>
    <source>
        <tissue>Liver</tissue>
    </source>
</reference>
<reference key="11">
    <citation type="journal article" date="2023" name="Bioorg. Chem.">
        <title>Deciphering the biotransformation mechanism of dialkylresorcinols by CYP4F11.</title>
        <authorList>
            <person name="Shi Y."/>
            <person name="Wolf C.A."/>
            <person name="Lotfy R."/>
            <person name="Sharma S.S."/>
            <person name="Tesfa A.F."/>
            <person name="Wolber G."/>
            <person name="Bureik M."/>
            <person name="Clark B.R."/>
        </authorList>
    </citation>
    <scope>FUNCTION</scope>
    <scope>CATALYTIC ACTIVITY</scope>
</reference>
<reference key="12">
    <citation type="journal article" date="2023" name="Int. J. Mol. Sci.">
        <title>Posttranslational Modification of Human Cytochrome CYP4F11 by 4-Hydroxynonenal Impairs omega-Hydroxylation in Malaria Pigment Hemozoin-Fed Monocytes: The Role in Malaria Immunosuppression.</title>
        <authorList>
            <person name="Skorokhod O."/>
            <person name="Triglione V."/>
            <person name="Barrera V."/>
            <person name="Di Nardo G."/>
            <person name="Valente E."/>
            <person name="Ulliers D."/>
            <person name="Schwarzer E."/>
            <person name="Gilardi G."/>
        </authorList>
    </citation>
    <scope>FUNCTION</scope>
    <scope>CATALYTIC ACTIVITY</scope>
    <scope>ACTIVITY REGULATION</scope>
    <scope>IDENTIFICATION BY MASS SPECTROMETRY</scope>
    <scope>4-HYDROXYNONENAL CONJUGATION CYS-45; CYS-260; HIS-261; HIS-347; CYS-354 AND LYS-451</scope>
</reference>
<sequence length="524" mass="60146">MPQLSLSWLGLGPVAASPWLLLLLVGGSWLLARVLAWTYTFYDNCRRLQCFPQPPKQNWFWGHQGLVTPTEEGMKTLTQLVTTYPQGFKLWLGPTFPLLILCHPDIIRPITSASAAVAPKDMIFYGFLKPWLGDGLLLSGGDKWSRHRRMLTPAFHFNILKPYMKIFNKSVNIMHDKWQRLASEGSARLDMFEHISLMTLDSLQKCVFSFESNCQEKPSEYIAAILELSAFVEKRNQQILLHTDFLYYLTPDGQRFRRACHLVHDFTDAVIQERRCTLPTQGIDDFLKNKAKSKTLDFIDVLLLSKDEDGKELSDEDIRAEADTFMFEGHDTTASGLSWVLYHLAKHPEYQEQCRQEVQELLKDREPIEIEWDDLAQLPFLTMCIKESLRLHPPVPVISRCCTQDFVLPDGRVIPKGIVCLINIIGIHYNPTVWPDPEVYDPFRFDQENIKERSPLAFIPFSAGPRNCIGQAFAMAEMKVVLALTLLHFRILPTHTEPRRKPELILRAEGGLWLRVEPLGANSQ</sequence>
<keyword id="KW-0256">Endoplasmic reticulum</keyword>
<keyword id="KW-0276">Fatty acid metabolism</keyword>
<keyword id="KW-0349">Heme</keyword>
<keyword id="KW-0408">Iron</keyword>
<keyword id="KW-0443">Lipid metabolism</keyword>
<keyword id="KW-0472">Membrane</keyword>
<keyword id="KW-0479">Metal-binding</keyword>
<keyword id="KW-0492">Microsome</keyword>
<keyword id="KW-0503">Monooxygenase</keyword>
<keyword id="KW-0521">NADP</keyword>
<keyword id="KW-0560">Oxidoreductase</keyword>
<keyword id="KW-1267">Proteomics identification</keyword>
<keyword id="KW-1185">Reference proteome</keyword>
<keyword id="KW-0812">Transmembrane</keyword>
<keyword id="KW-1133">Transmembrane helix</keyword>